<keyword id="KW-0007">Acetylation</keyword>
<keyword id="KW-0158">Chromosome</keyword>
<keyword id="KW-0238">DNA-binding</keyword>
<keyword id="KW-0488">Methylation</keyword>
<keyword id="KW-0544">Nucleosome core</keyword>
<keyword id="KW-0539">Nucleus</keyword>
<keyword id="KW-0597">Phosphoprotein</keyword>
<gene>
    <name type="primary">His4</name>
    <name type="synonym">H4</name>
</gene>
<gene>
    <name type="ORF">GG16866</name>
</gene>
<gene>
    <name type="ORF">GG21497</name>
</gene>
<gene>
    <name type="ORF">GG21499</name>
</gene>
<evidence type="ECO:0000250" key="1"/>
<evidence type="ECO:0000250" key="2">
    <source>
        <dbReference type="UniProtKB" id="P62805"/>
    </source>
</evidence>
<evidence type="ECO:0000250" key="3">
    <source>
        <dbReference type="UniProtKB" id="P84040"/>
    </source>
</evidence>
<evidence type="ECO:0000256" key="4">
    <source>
        <dbReference type="SAM" id="MobiDB-lite"/>
    </source>
</evidence>
<evidence type="ECO:0000305" key="5"/>
<proteinExistence type="inferred from homology"/>
<accession>P84041</accession>
<accession>B3NLS1</accession>
<accession>P02307</accession>
<accession>Q9VFH7</accession>
<protein>
    <recommendedName>
        <fullName>Histone H4</fullName>
    </recommendedName>
</protein>
<reference key="1">
    <citation type="journal article" date="2001" name="Genes Genet. Syst.">
        <title>Molecular evolutionary analysis of a histone gene repeating unit from Drosophila simulans.</title>
        <authorList>
            <person name="Tsunemoto K."/>
            <person name="Matsuo Y."/>
        </authorList>
    </citation>
    <scope>NUCLEOTIDE SEQUENCE [GENOMIC DNA] (HIS4)</scope>
</reference>
<reference key="2">
    <citation type="journal article" date="2007" name="Nature">
        <title>Evolution of genes and genomes on the Drosophila phylogeny.</title>
        <authorList>
            <consortium name="Drosophila 12 genomes consortium"/>
        </authorList>
    </citation>
    <scope>NUCLEOTIDE SEQUENCE [LARGE SCALE GENOMIC DNA] (GG16866; GG21497 AND GG21499)</scope>
    <source>
        <strain>Tucson 14021-0224.01</strain>
    </source>
</reference>
<dbReference type="EMBL" id="AB073634">
    <property type="protein sequence ID" value="BAC54551.1"/>
    <property type="molecule type" value="Genomic_DNA"/>
</dbReference>
<dbReference type="EMBL" id="CH954179">
    <property type="protein sequence ID" value="EDV54409.1"/>
    <property type="molecule type" value="Genomic_DNA"/>
</dbReference>
<dbReference type="EMBL" id="CH954179">
    <property type="protein sequence ID" value="EDV54414.1"/>
    <property type="molecule type" value="Genomic_DNA"/>
</dbReference>
<dbReference type="EMBL" id="CH954181">
    <property type="protein sequence ID" value="EDV48906.1"/>
    <property type="molecule type" value="Genomic_DNA"/>
</dbReference>
<dbReference type="RefSeq" id="XP_001974009.1">
    <property type="nucleotide sequence ID" value="XM_001973973.2"/>
</dbReference>
<dbReference type="RefSeq" id="XP_001982909.2">
    <property type="nucleotide sequence ID" value="XM_001982873.2"/>
</dbReference>
<dbReference type="RefSeq" id="XP_015008608.1">
    <property type="nucleotide sequence ID" value="XM_015153122.1"/>
</dbReference>
<dbReference type="SMR" id="P84041"/>
<dbReference type="EnsemblMetazoa" id="FBtr0136920">
    <property type="protein sequence ID" value="FBpp0135412"/>
    <property type="gene ID" value="FBgn0109094"/>
</dbReference>
<dbReference type="EnsemblMetazoa" id="FBtr0141551">
    <property type="protein sequence ID" value="FBpp0140043"/>
    <property type="gene ID" value="FBgn0113676"/>
</dbReference>
<dbReference type="EnsemblMetazoa" id="FBtr0141553">
    <property type="protein sequence ID" value="FBpp0140045"/>
    <property type="gene ID" value="FBgn0113678"/>
</dbReference>
<dbReference type="EnsemblMetazoa" id="XM_001973978.3">
    <property type="protein sequence ID" value="XP_001974014.1"/>
    <property type="gene ID" value="LOC6548695"/>
</dbReference>
<dbReference type="EnsemblMetazoa" id="XM_001979912.3">
    <property type="protein sequence ID" value="XP_001979948.1"/>
    <property type="gene ID" value="LOC6552863"/>
</dbReference>
<dbReference type="EnsemblMetazoa" id="XM_001982873.3">
    <property type="protein sequence ID" value="XP_001982909.3"/>
    <property type="gene ID" value="LOC6556049"/>
</dbReference>
<dbReference type="EnsemblMetazoa" id="XM_015153122.2">
    <property type="protein sequence ID" value="XP_015008608.2"/>
    <property type="gene ID" value="LOC6556039"/>
</dbReference>
<dbReference type="EnsemblMetazoa" id="XM_026975991.1">
    <property type="protein sequence ID" value="XP_026831792.1"/>
    <property type="gene ID" value="LOC6552863"/>
</dbReference>
<dbReference type="EnsemblMetazoa" id="XM_026983602.1">
    <property type="protein sequence ID" value="XP_026839403.1"/>
    <property type="gene ID" value="LOC6548710"/>
</dbReference>
<dbReference type="EnsemblMetazoa" id="XM_026983603.1">
    <property type="protein sequence ID" value="XP_026839404.1"/>
    <property type="gene ID" value="LOC6548705"/>
</dbReference>
<dbReference type="EnsemblMetazoa" id="XM_026983604.1">
    <property type="protein sequence ID" value="XP_026839405.1"/>
    <property type="gene ID" value="LOC6556033"/>
</dbReference>
<dbReference type="EnsemblMetazoa" id="XM_026983616.1">
    <property type="protein sequence ID" value="XP_026839417.1"/>
    <property type="gene ID" value="LOC26526498"/>
</dbReference>
<dbReference type="EnsemblMetazoa" id="XM_026983617.1">
    <property type="protein sequence ID" value="XP_026839418.1"/>
    <property type="gene ID" value="LOC113564785"/>
</dbReference>
<dbReference type="EnsemblMetazoa" id="XM_026983642.1">
    <property type="protein sequence ID" value="XP_026839443.1"/>
    <property type="gene ID" value="LOC113564795"/>
</dbReference>
<dbReference type="EnsemblMetazoa" id="XM_026983649.1">
    <property type="protein sequence ID" value="XP_026839450.1"/>
    <property type="gene ID" value="LOC6549045"/>
</dbReference>
<dbReference type="EnsemblMetazoa" id="XM_026983650.1">
    <property type="protein sequence ID" value="XP_026839451.1"/>
    <property type="gene ID" value="LOC113564802"/>
</dbReference>
<dbReference type="GeneID" id="6548695"/>
<dbReference type="GeneID" id="6552863"/>
<dbReference type="GeneID" id="6556039"/>
<dbReference type="KEGG" id="der:6548695"/>
<dbReference type="KEGG" id="der:6552863"/>
<dbReference type="KEGG" id="der:6556039"/>
<dbReference type="KEGG" id="der:6556049"/>
<dbReference type="CTD" id="41773"/>
<dbReference type="eggNOG" id="KOG3467">
    <property type="taxonomic scope" value="Eukaryota"/>
</dbReference>
<dbReference type="HOGENOM" id="CLU_109117_2_3_1"/>
<dbReference type="OMA" id="QKEHING"/>
<dbReference type="OrthoDB" id="8179904at2759"/>
<dbReference type="PhylomeDB" id="P84041"/>
<dbReference type="Proteomes" id="UP000008711">
    <property type="component" value="Unassembled WGS sequence"/>
</dbReference>
<dbReference type="GO" id="GO:0000228">
    <property type="term" value="C:nuclear chromosome"/>
    <property type="evidence" value="ECO:0007669"/>
    <property type="project" value="EnsemblMetazoa"/>
</dbReference>
<dbReference type="GO" id="GO:0000786">
    <property type="term" value="C:nucleosome"/>
    <property type="evidence" value="ECO:0000250"/>
    <property type="project" value="UniProtKB"/>
</dbReference>
<dbReference type="GO" id="GO:0035059">
    <property type="term" value="C:RCAF complex"/>
    <property type="evidence" value="ECO:0007669"/>
    <property type="project" value="EnsemblMetazoa"/>
</dbReference>
<dbReference type="GO" id="GO:0003677">
    <property type="term" value="F:DNA binding"/>
    <property type="evidence" value="ECO:0000250"/>
    <property type="project" value="UniProtKB"/>
</dbReference>
<dbReference type="GO" id="GO:0046982">
    <property type="term" value="F:protein heterodimerization activity"/>
    <property type="evidence" value="ECO:0007669"/>
    <property type="project" value="InterPro"/>
</dbReference>
<dbReference type="GO" id="GO:0030527">
    <property type="term" value="F:structural constituent of chromatin"/>
    <property type="evidence" value="ECO:0007669"/>
    <property type="project" value="InterPro"/>
</dbReference>
<dbReference type="GO" id="GO:0006334">
    <property type="term" value="P:nucleosome assembly"/>
    <property type="evidence" value="ECO:0000250"/>
    <property type="project" value="UniProtKB"/>
</dbReference>
<dbReference type="CDD" id="cd22912">
    <property type="entry name" value="HFD_H4"/>
    <property type="match status" value="1"/>
</dbReference>
<dbReference type="FunFam" id="1.10.20.10:FF:000002">
    <property type="entry name" value="Histone H4"/>
    <property type="match status" value="1"/>
</dbReference>
<dbReference type="Gene3D" id="1.10.20.10">
    <property type="entry name" value="Histone, subunit A"/>
    <property type="match status" value="1"/>
</dbReference>
<dbReference type="InterPro" id="IPR035425">
    <property type="entry name" value="CENP-T/H4_C"/>
</dbReference>
<dbReference type="InterPro" id="IPR009072">
    <property type="entry name" value="Histone-fold"/>
</dbReference>
<dbReference type="InterPro" id="IPR001951">
    <property type="entry name" value="Histone_H4"/>
</dbReference>
<dbReference type="InterPro" id="IPR019809">
    <property type="entry name" value="Histone_H4_CS"/>
</dbReference>
<dbReference type="InterPro" id="IPR004823">
    <property type="entry name" value="TAF_TATA-bd_Histone-like_dom"/>
</dbReference>
<dbReference type="PANTHER" id="PTHR10484">
    <property type="entry name" value="HISTONE H4"/>
    <property type="match status" value="1"/>
</dbReference>
<dbReference type="Pfam" id="PF15511">
    <property type="entry name" value="CENP-T_C"/>
    <property type="match status" value="1"/>
</dbReference>
<dbReference type="PRINTS" id="PR00623">
    <property type="entry name" value="HISTONEH4"/>
</dbReference>
<dbReference type="SMART" id="SM00417">
    <property type="entry name" value="H4"/>
    <property type="match status" value="1"/>
</dbReference>
<dbReference type="SMART" id="SM00803">
    <property type="entry name" value="TAF"/>
    <property type="match status" value="1"/>
</dbReference>
<dbReference type="SUPFAM" id="SSF47113">
    <property type="entry name" value="Histone-fold"/>
    <property type="match status" value="1"/>
</dbReference>
<dbReference type="PROSITE" id="PS00047">
    <property type="entry name" value="HISTONE_H4"/>
    <property type="match status" value="1"/>
</dbReference>
<sequence length="103" mass="11381">MTGRGKGGKGLGKGGAKRHRKVLRDNIQGITKPAIRRLARRGGVKRISGLIYEETRGVLKVFLENVIRDAVTYTEHAKRKTVTAMDVVYALKRQGRTLYGFGG</sequence>
<organism>
    <name type="scientific">Drosophila erecta</name>
    <name type="common">Fruit fly</name>
    <dbReference type="NCBI Taxonomy" id="7220"/>
    <lineage>
        <taxon>Eukaryota</taxon>
        <taxon>Metazoa</taxon>
        <taxon>Ecdysozoa</taxon>
        <taxon>Arthropoda</taxon>
        <taxon>Hexapoda</taxon>
        <taxon>Insecta</taxon>
        <taxon>Pterygota</taxon>
        <taxon>Neoptera</taxon>
        <taxon>Endopterygota</taxon>
        <taxon>Diptera</taxon>
        <taxon>Brachycera</taxon>
        <taxon>Muscomorpha</taxon>
        <taxon>Ephydroidea</taxon>
        <taxon>Drosophilidae</taxon>
        <taxon>Drosophila</taxon>
        <taxon>Sophophora</taxon>
    </lineage>
</organism>
<name>H4_DROER</name>
<comment type="function">
    <text>Core component of nucleosome. Nucleosomes wrap and compact DNA into chromatin, limiting DNA accessibility to the cellular machineries which require DNA as a template. Histones thereby play a central role in transcription regulation, DNA repair, DNA replication and chromosomal stability. DNA accessibility is regulated via a complex set of post-translational modifications of histones, also called histone code, and nucleosome remodeling.</text>
</comment>
<comment type="subunit">
    <text>The nucleosome is a histone octamer containing two molecules each of H2A, H2B, H3 and H4 assembled in one H3-H4 heterotetramer and two H2A-H2B heterodimers. The octamer wraps approximately 147 bp of DNA.</text>
</comment>
<comment type="subcellular location">
    <subcellularLocation>
        <location evidence="1">Nucleus</location>
    </subcellularLocation>
    <subcellularLocation>
        <location evidence="1">Chromosome</location>
    </subcellularLocation>
</comment>
<comment type="PTM">
    <text evidence="3">Acetylated on Lys-6 (H4K5ac) and Lys-13 (H4K12ac) during prophase I of meiosis. Phosphorylation of H2A 'Thr-119' is a prerequisite for H4 Lys-6 acetylation but not for H4 Lys-13 acetylation. Acetylated on Lys-6 and Lys-13 by the Ada2a-containing (ATAC) histone acetyltransferase complex.</text>
</comment>
<comment type="similarity">
    <text evidence="5">Belongs to the histone H4 family.</text>
</comment>
<feature type="initiator methionine" description="Removed" evidence="1">
    <location>
        <position position="1"/>
    </location>
</feature>
<feature type="chain" id="PRO_0000158302" description="Histone H4">
    <location>
        <begin position="2"/>
        <end position="103"/>
    </location>
</feature>
<feature type="DNA-binding region">
    <location>
        <begin position="17"/>
        <end position="21"/>
    </location>
</feature>
<feature type="region of interest" description="Disordered" evidence="4">
    <location>
        <begin position="1"/>
        <end position="20"/>
    </location>
</feature>
<feature type="compositionally biased region" description="Gly residues" evidence="4">
    <location>
        <begin position="1"/>
        <end position="14"/>
    </location>
</feature>
<feature type="modified residue" description="N6-acetyl-N6-methyllysine; alternate" evidence="2">
    <location>
        <position position="6"/>
    </location>
</feature>
<feature type="modified residue" description="N6-acetyllysine" evidence="3">
    <location>
        <position position="6"/>
    </location>
</feature>
<feature type="modified residue" description="N6-acetyl-N6-methyllysine; alternate" evidence="2">
    <location>
        <position position="13"/>
    </location>
</feature>
<feature type="modified residue" description="N6-acetyllysine" evidence="3">
    <location>
        <position position="13"/>
    </location>
</feature>
<feature type="modified residue" description="N6-succinyllysine" evidence="3">
    <location>
        <position position="32"/>
    </location>
</feature>
<feature type="modified residue" description="N6-succinyllysine" evidence="3">
    <location>
        <position position="78"/>
    </location>
</feature>
<feature type="modified residue" description="N6-succinyllysine" evidence="3">
    <location>
        <position position="80"/>
    </location>
</feature>
<feature type="modified residue" description="Phosphothreonine" evidence="3">
    <location>
        <position position="81"/>
    </location>
</feature>
<feature type="modified residue" description="Phosphothreonine" evidence="3">
    <location>
        <position position="83"/>
    </location>
</feature>
<feature type="modified residue" description="N6-succinyllysine" evidence="3">
    <location>
        <position position="92"/>
    </location>
</feature>